<evidence type="ECO:0000250" key="1"/>
<evidence type="ECO:0000255" key="2"/>
<evidence type="ECO:0000256" key="3">
    <source>
        <dbReference type="SAM" id="MobiDB-lite"/>
    </source>
</evidence>
<evidence type="ECO:0000305" key="4"/>
<accession>Q40237</accession>
<dbReference type="EMBL" id="L13083">
    <property type="protein sequence ID" value="AAA33405.1"/>
    <property type="molecule type" value="mRNA"/>
</dbReference>
<dbReference type="PIR" id="JT0756">
    <property type="entry name" value="JT0756"/>
</dbReference>
<dbReference type="SMR" id="Q40237"/>
<dbReference type="Allergome" id="460">
    <property type="allergen name" value="Lol p 5"/>
</dbReference>
<dbReference type="Allergome" id="461">
    <property type="allergen name" value="Lol p 5.0101"/>
</dbReference>
<dbReference type="CDD" id="cd12805">
    <property type="entry name" value="Allergen_V_VI"/>
    <property type="match status" value="1"/>
</dbReference>
<dbReference type="Gene3D" id="1.20.120.320">
    <property type="entry name" value="Group V grass pollen allergen"/>
    <property type="match status" value="2"/>
</dbReference>
<dbReference type="InterPro" id="IPR002914">
    <property type="entry name" value="Poa_pIX/Phl_pVI"/>
</dbReference>
<dbReference type="InterPro" id="IPR035506">
    <property type="entry name" value="Pollen_allergen/Os"/>
</dbReference>
<dbReference type="Pfam" id="PF01620">
    <property type="entry name" value="Pollen_allerg_2"/>
    <property type="match status" value="2"/>
</dbReference>
<dbReference type="PRINTS" id="PR00833">
    <property type="entry name" value="POAALLERGEN"/>
</dbReference>
<dbReference type="SUPFAM" id="SSF81736">
    <property type="entry name" value="Group V grass pollen allergen"/>
    <property type="match status" value="2"/>
</dbReference>
<sequence length="339" mass="33750">MAVQKHTVALFLAVALVAGPAASYAADAGYAPATPATPAAPATAATPATPATPATPAAVPSGKATTEEQKLIEKINAGFKAAVAAAAVVPPADKYKTFVETFGTATNKAFVEGLASGYADQSKNQLTSKLDAALKLAYEAAQGATPEAKYDAYVATLTEALRVIAGTLEVHAVKPAAEEVKVGAIPAAEVQLIDKVDAAYRTAATAANAAPANDKFTVFENTFNNAIKVSLGAAYDSYKFIPTLVAAVKQAYAAKQATAPEVKYTVSETALKKAVTAMSEAEKEATPAAAATATPTPAAATATATPAAAYATATPAAATATATPAAATATPAAAGGYKV</sequence>
<organism>
    <name type="scientific">Lolium perenne</name>
    <name type="common">Perennial ryegrass</name>
    <dbReference type="NCBI Taxonomy" id="4522"/>
    <lineage>
        <taxon>Eukaryota</taxon>
        <taxon>Viridiplantae</taxon>
        <taxon>Streptophyta</taxon>
        <taxon>Embryophyta</taxon>
        <taxon>Tracheophyta</taxon>
        <taxon>Spermatophyta</taxon>
        <taxon>Magnoliopsida</taxon>
        <taxon>Liliopsida</taxon>
        <taxon>Poales</taxon>
        <taxon>Poaceae</taxon>
        <taxon>BOP clade</taxon>
        <taxon>Pooideae</taxon>
        <taxon>Poodae</taxon>
        <taxon>Poeae</taxon>
        <taxon>Poeae Chloroplast Group 2 (Poeae type)</taxon>
        <taxon>Loliodinae</taxon>
        <taxon>Loliinae</taxon>
        <taxon>Lolium</taxon>
    </lineage>
</organism>
<reference key="1">
    <citation type="journal article" date="1993" name="Gene">
        <title>Cloning of a cDNA encoding a group-V (group-IX) allergen isoform from rye-grass pollen that demonstrates specific antigenic immunoreactivity.</title>
        <authorList>
            <person name="Ong E.K."/>
            <person name="Griffith I.J."/>
            <person name="Knox R.B."/>
            <person name="Singh M.B."/>
        </authorList>
    </citation>
    <scope>NUCLEOTIDE SEQUENCE [MRNA]</scope>
    <source>
        <tissue>Pollen</tissue>
    </source>
</reference>
<feature type="signal peptide" evidence="2">
    <location>
        <begin position="1"/>
        <end position="25"/>
    </location>
</feature>
<feature type="chain" id="PRO_0000021745" description="Major pollen allergen Lol p 5b">
    <location>
        <begin position="26"/>
        <end position="339"/>
    </location>
</feature>
<feature type="repeat" description="1-1">
    <location>
        <begin position="32"/>
        <end position="34"/>
    </location>
</feature>
<feature type="repeat" description="1-2">
    <location>
        <begin position="35"/>
        <end position="37"/>
    </location>
</feature>
<feature type="repeat" description="1-3">
    <location>
        <begin position="38"/>
        <end position="40"/>
    </location>
</feature>
<feature type="repeat" description="1-4">
    <location>
        <begin position="41"/>
        <end position="43"/>
    </location>
</feature>
<feature type="repeat" description="1-5">
    <location>
        <begin position="44"/>
        <end position="46"/>
    </location>
</feature>
<feature type="repeat" description="1-6">
    <location>
        <begin position="47"/>
        <end position="49"/>
    </location>
</feature>
<feature type="repeat" description="1-7">
    <location>
        <begin position="50"/>
        <end position="52"/>
    </location>
</feature>
<feature type="repeat" description="1-8">
    <location>
        <begin position="53"/>
        <end position="55"/>
    </location>
</feature>
<feature type="repeat" description="1-9">
    <location>
        <begin position="56"/>
        <end position="58"/>
    </location>
</feature>
<feature type="repeat" description="2-1; truncated">
    <location>
        <begin position="285"/>
        <end position="290"/>
    </location>
</feature>
<feature type="repeat" description="2-2">
    <location>
        <begin position="292"/>
        <end position="300"/>
    </location>
</feature>
<feature type="repeat" description="2-3">
    <location>
        <begin position="301"/>
        <end position="309"/>
    </location>
</feature>
<feature type="repeat" description="2-4">
    <location>
        <begin position="310"/>
        <end position="318"/>
    </location>
</feature>
<feature type="repeat" description="2-5">
    <location>
        <begin position="319"/>
        <end position="327"/>
    </location>
</feature>
<feature type="repeat" description="2-6; truncated">
    <location>
        <begin position="328"/>
        <end position="334"/>
    </location>
</feature>
<feature type="region of interest" description="9 X 3 AA tandem repeats of [PA]-A-[TA]">
    <location>
        <begin position="32"/>
        <end position="58"/>
    </location>
</feature>
<feature type="region of interest" description="Disordered" evidence="3">
    <location>
        <begin position="36"/>
        <end position="65"/>
    </location>
</feature>
<feature type="region of interest" description="6 X 9 AA approximate tandem repeats of T-A-T-A-T-P-A-A-A">
    <location>
        <begin position="285"/>
        <end position="334"/>
    </location>
</feature>
<feature type="compositionally biased region" description="Low complexity" evidence="3">
    <location>
        <begin position="36"/>
        <end position="58"/>
    </location>
</feature>
<comment type="subcellular location">
    <text evidence="1">Starch granule.</text>
</comment>
<comment type="tissue specificity">
    <text>Pollen, starch granules.</text>
</comment>
<comment type="allergen">
    <text>Causes an allergic reaction in human. Causes grass pollen allergy.</text>
</comment>
<comment type="similarity">
    <text evidence="4">Belongs to the Poa p IX/Phl p VI allergen family.</text>
</comment>
<keyword id="KW-0020">Allergen</keyword>
<keyword id="KW-0677">Repeat</keyword>
<keyword id="KW-0732">Signal</keyword>
<proteinExistence type="evidence at protein level"/>
<name>MPA5B_LOLPR</name>
<protein>
    <recommendedName>
        <fullName>Major pollen allergen Lol p 5b</fullName>
    </recommendedName>
    <alternativeName>
        <fullName>Allergen Lol p Vb</fullName>
    </alternativeName>
    <allergenName>Lol p 5b</allergenName>
</protein>